<dbReference type="EC" id="2.2.1.9" evidence="1"/>
<dbReference type="EMBL" id="AE017262">
    <property type="protein sequence ID" value="AAT04472.1"/>
    <property type="molecule type" value="Genomic_DNA"/>
</dbReference>
<dbReference type="RefSeq" id="WP_010958930.1">
    <property type="nucleotide sequence ID" value="NC_002973.6"/>
</dbReference>
<dbReference type="PDB" id="3LQ1">
    <property type="method" value="X-ray"/>
    <property type="resolution" value="2.60 A"/>
    <property type="chains" value="A/B=2-568"/>
</dbReference>
<dbReference type="PDBsum" id="3LQ1"/>
<dbReference type="SMR" id="Q71YZ2"/>
<dbReference type="KEGG" id="lmf:LMOf2365_1699"/>
<dbReference type="HOGENOM" id="CLU_006051_3_0_9"/>
<dbReference type="UniPathway" id="UPA00079"/>
<dbReference type="UniPathway" id="UPA01057">
    <property type="reaction ID" value="UER00164"/>
</dbReference>
<dbReference type="EvolutionaryTrace" id="Q71YZ2"/>
<dbReference type="GO" id="GO:0070204">
    <property type="term" value="F:2-succinyl-5-enolpyruvyl-6-hydroxy-3-cyclohexene-1-carboxylic-acid synthase activity"/>
    <property type="evidence" value="ECO:0007669"/>
    <property type="project" value="UniProtKB-UniRule"/>
</dbReference>
<dbReference type="GO" id="GO:0000287">
    <property type="term" value="F:magnesium ion binding"/>
    <property type="evidence" value="ECO:0007669"/>
    <property type="project" value="UniProtKB-UniRule"/>
</dbReference>
<dbReference type="GO" id="GO:0030145">
    <property type="term" value="F:manganese ion binding"/>
    <property type="evidence" value="ECO:0007669"/>
    <property type="project" value="UniProtKB-UniRule"/>
</dbReference>
<dbReference type="GO" id="GO:0030976">
    <property type="term" value="F:thiamine pyrophosphate binding"/>
    <property type="evidence" value="ECO:0007669"/>
    <property type="project" value="UniProtKB-UniRule"/>
</dbReference>
<dbReference type="GO" id="GO:0009234">
    <property type="term" value="P:menaquinone biosynthetic process"/>
    <property type="evidence" value="ECO:0007669"/>
    <property type="project" value="UniProtKB-UniRule"/>
</dbReference>
<dbReference type="CDD" id="cd07037">
    <property type="entry name" value="TPP_PYR_MenD"/>
    <property type="match status" value="1"/>
</dbReference>
<dbReference type="CDD" id="cd02009">
    <property type="entry name" value="TPP_SHCHC_synthase"/>
    <property type="match status" value="1"/>
</dbReference>
<dbReference type="Gene3D" id="3.40.50.970">
    <property type="match status" value="2"/>
</dbReference>
<dbReference type="Gene3D" id="3.40.50.1220">
    <property type="entry name" value="TPP-binding domain"/>
    <property type="match status" value="1"/>
</dbReference>
<dbReference type="HAMAP" id="MF_01659">
    <property type="entry name" value="MenD"/>
    <property type="match status" value="1"/>
</dbReference>
<dbReference type="InterPro" id="IPR029035">
    <property type="entry name" value="DHS-like_NAD/FAD-binding_dom"/>
</dbReference>
<dbReference type="InterPro" id="IPR004433">
    <property type="entry name" value="MenaQ_synth_MenD"/>
</dbReference>
<dbReference type="InterPro" id="IPR032264">
    <property type="entry name" value="MenD_middle"/>
</dbReference>
<dbReference type="InterPro" id="IPR029061">
    <property type="entry name" value="THDP-binding"/>
</dbReference>
<dbReference type="InterPro" id="IPR012001">
    <property type="entry name" value="Thiamin_PyroP_enz_TPP-bd_dom"/>
</dbReference>
<dbReference type="InterPro" id="IPR011766">
    <property type="entry name" value="TPP_enzyme_TPP-bd"/>
</dbReference>
<dbReference type="NCBIfam" id="TIGR00173">
    <property type="entry name" value="menD"/>
    <property type="match status" value="1"/>
</dbReference>
<dbReference type="PANTHER" id="PTHR42916">
    <property type="entry name" value="2-SUCCINYL-5-ENOLPYRUVYL-6-HYDROXY-3-CYCLOHEXENE-1-CARBOXYLATE SYNTHASE"/>
    <property type="match status" value="1"/>
</dbReference>
<dbReference type="PANTHER" id="PTHR42916:SF1">
    <property type="entry name" value="PROTEIN PHYLLO, CHLOROPLASTIC"/>
    <property type="match status" value="1"/>
</dbReference>
<dbReference type="Pfam" id="PF02775">
    <property type="entry name" value="TPP_enzyme_C"/>
    <property type="match status" value="1"/>
</dbReference>
<dbReference type="Pfam" id="PF16582">
    <property type="entry name" value="TPP_enzyme_M_2"/>
    <property type="match status" value="1"/>
</dbReference>
<dbReference type="Pfam" id="PF02776">
    <property type="entry name" value="TPP_enzyme_N"/>
    <property type="match status" value="1"/>
</dbReference>
<dbReference type="PIRSF" id="PIRSF004983">
    <property type="entry name" value="MenD"/>
    <property type="match status" value="1"/>
</dbReference>
<dbReference type="SUPFAM" id="SSF52467">
    <property type="entry name" value="DHS-like NAD/FAD-binding domain"/>
    <property type="match status" value="1"/>
</dbReference>
<dbReference type="SUPFAM" id="SSF52518">
    <property type="entry name" value="Thiamin diphosphate-binding fold (THDP-binding)"/>
    <property type="match status" value="2"/>
</dbReference>
<accession>Q71YZ2</accession>
<organism>
    <name type="scientific">Listeria monocytogenes serotype 4b (strain F2365)</name>
    <dbReference type="NCBI Taxonomy" id="265669"/>
    <lineage>
        <taxon>Bacteria</taxon>
        <taxon>Bacillati</taxon>
        <taxon>Bacillota</taxon>
        <taxon>Bacilli</taxon>
        <taxon>Bacillales</taxon>
        <taxon>Listeriaceae</taxon>
        <taxon>Listeria</taxon>
    </lineage>
</organism>
<name>MEND_LISMF</name>
<reference key="1">
    <citation type="journal article" date="2004" name="Nucleic Acids Res.">
        <title>Whole genome comparisons of serotype 4b and 1/2a strains of the food-borne pathogen Listeria monocytogenes reveal new insights into the core genome components of this species.</title>
        <authorList>
            <person name="Nelson K.E."/>
            <person name="Fouts D.E."/>
            <person name="Mongodin E.F."/>
            <person name="Ravel J."/>
            <person name="DeBoy R.T."/>
            <person name="Kolonay J.F."/>
            <person name="Rasko D.A."/>
            <person name="Angiuoli S.V."/>
            <person name="Gill S.R."/>
            <person name="Paulsen I.T."/>
            <person name="Peterson J.D."/>
            <person name="White O."/>
            <person name="Nelson W.C."/>
            <person name="Nierman W.C."/>
            <person name="Beanan M.J."/>
            <person name="Brinkac L.M."/>
            <person name="Daugherty S.C."/>
            <person name="Dodson R.J."/>
            <person name="Durkin A.S."/>
            <person name="Madupu R."/>
            <person name="Haft D.H."/>
            <person name="Selengut J."/>
            <person name="Van Aken S.E."/>
            <person name="Khouri H.M."/>
            <person name="Fedorova N."/>
            <person name="Forberger H.A."/>
            <person name="Tran B."/>
            <person name="Kathariou S."/>
            <person name="Wonderling L.D."/>
            <person name="Uhlich G.A."/>
            <person name="Bayles D.O."/>
            <person name="Luchansky J.B."/>
            <person name="Fraser C.M."/>
        </authorList>
    </citation>
    <scope>NUCLEOTIDE SEQUENCE [LARGE SCALE GENOMIC DNA]</scope>
    <source>
        <strain>F2365</strain>
    </source>
</reference>
<evidence type="ECO:0000255" key="1">
    <source>
        <dbReference type="HAMAP-Rule" id="MF_01659"/>
    </source>
</evidence>
<evidence type="ECO:0007829" key="2">
    <source>
        <dbReference type="PDB" id="3LQ1"/>
    </source>
</evidence>
<sequence length="580" mass="64580">MTNHEQVLTDYLAAFIEELVQAGVKEAIISPGSRSTPLALMMAEHPILKIYVDVDERSAGFFALGLAKASKRPVVLLCTSGTAAANYFPAVAEANLSQIPLIVLTADRPHELRNVGAPQAMDQLHLYGSHVKDFTDMALPENSEEMLRYAKWHGSRAVDIAMKTPRGPVHLNFPLREPLVPILEPSPFTATGKKHHHVHIYYTHEVLDDSSIQKMVTECTGKKGVFVVGPIDKKELEQPMVDLAKKLGWPILADPLSGLRSYGALDEVVIDQYDAFLKEAEIIDKLTPEVVIRFGSMPVSKPLKNWLEQLSDIRFYVVDPGAAWKDPIKAVTDMIHCDERFLLDIMQQNMPDDAKDAAWLNGWTSYNKVAREIVLAEMANTTILEEGKIVAELRRLLPDKAGLFIGNSMPIRDVDTYFSQIDKKIKMLANRGANGIDGVVSSALGASVVFQPMFLLIGDLSFYHDMNGLLMAKKYKMNLTIVIVNNDGGGIFSFLPQANEPKYFESLFGTSTELDFRFAAAFYDADYHEAKSVDELEEAIDKASYHKGLDIIEVKTNRHENKANHQALWVKIADALKALD</sequence>
<keyword id="KW-0002">3D-structure</keyword>
<keyword id="KW-0460">Magnesium</keyword>
<keyword id="KW-0464">Manganese</keyword>
<keyword id="KW-0474">Menaquinone biosynthesis</keyword>
<keyword id="KW-0479">Metal-binding</keyword>
<keyword id="KW-0786">Thiamine pyrophosphate</keyword>
<keyword id="KW-0808">Transferase</keyword>
<feature type="chain" id="PRO_0000341769" description="2-succinyl-5-enolpyruvyl-6-hydroxy-3-cyclohexene-1-carboxylate synthase">
    <location>
        <begin position="1"/>
        <end position="580"/>
    </location>
</feature>
<feature type="helix" evidence="2">
    <location>
        <begin position="4"/>
        <end position="21"/>
    </location>
</feature>
<feature type="strand" evidence="2">
    <location>
        <begin position="26"/>
        <end position="29"/>
    </location>
</feature>
<feature type="turn" evidence="2">
    <location>
        <begin position="33"/>
        <end position="35"/>
    </location>
</feature>
<feature type="helix" evidence="2">
    <location>
        <begin position="36"/>
        <end position="44"/>
    </location>
</feature>
<feature type="strand" evidence="2">
    <location>
        <begin position="49"/>
        <end position="52"/>
    </location>
</feature>
<feature type="helix" evidence="2">
    <location>
        <begin position="56"/>
        <end position="70"/>
    </location>
</feature>
<feature type="strand" evidence="2">
    <location>
        <begin position="74"/>
        <end position="78"/>
    </location>
</feature>
<feature type="helix" evidence="2">
    <location>
        <begin position="82"/>
        <end position="85"/>
    </location>
</feature>
<feature type="helix" evidence="2">
    <location>
        <begin position="88"/>
        <end position="96"/>
    </location>
</feature>
<feature type="strand" evidence="2">
    <location>
        <begin position="101"/>
        <end position="107"/>
    </location>
</feature>
<feature type="helix" evidence="2">
    <location>
        <begin position="110"/>
        <end position="112"/>
    </location>
</feature>
<feature type="turn" evidence="2">
    <location>
        <begin position="124"/>
        <end position="127"/>
    </location>
</feature>
<feature type="helix" evidence="2">
    <location>
        <begin position="128"/>
        <end position="130"/>
    </location>
</feature>
<feature type="strand" evidence="2">
    <location>
        <begin position="131"/>
        <end position="136"/>
    </location>
</feature>
<feature type="helix" evidence="2">
    <location>
        <begin position="144"/>
        <end position="162"/>
    </location>
</feature>
<feature type="strand" evidence="2">
    <location>
        <begin position="163"/>
        <end position="165"/>
    </location>
</feature>
<feature type="strand" evidence="2">
    <location>
        <begin position="169"/>
        <end position="174"/>
    </location>
</feature>
<feature type="strand" evidence="2">
    <location>
        <begin position="203"/>
        <end position="207"/>
    </location>
</feature>
<feature type="helix" evidence="2">
    <location>
        <begin position="209"/>
        <end position="218"/>
    </location>
</feature>
<feature type="turn" evidence="2">
    <location>
        <begin position="219"/>
        <end position="221"/>
    </location>
</feature>
<feature type="strand" evidence="2">
    <location>
        <begin position="224"/>
        <end position="228"/>
    </location>
</feature>
<feature type="helix" evidence="2">
    <location>
        <begin position="237"/>
        <end position="247"/>
    </location>
</feature>
<feature type="strand" evidence="2">
    <location>
        <begin position="251"/>
        <end position="253"/>
    </location>
</feature>
<feature type="helix" evidence="2">
    <location>
        <begin position="255"/>
        <end position="257"/>
    </location>
</feature>
<feature type="strand" evidence="2">
    <location>
        <begin position="261"/>
        <end position="264"/>
    </location>
</feature>
<feature type="strand" evidence="2">
    <location>
        <begin position="267"/>
        <end position="270"/>
    </location>
</feature>
<feature type="helix" evidence="2">
    <location>
        <begin position="273"/>
        <end position="276"/>
    </location>
</feature>
<feature type="helix" evidence="2">
    <location>
        <begin position="280"/>
        <end position="285"/>
    </location>
</feature>
<feature type="strand" evidence="2">
    <location>
        <begin position="289"/>
        <end position="296"/>
    </location>
</feature>
<feature type="helix" evidence="2">
    <location>
        <begin position="301"/>
        <end position="309"/>
    </location>
</feature>
<feature type="strand" evidence="2">
    <location>
        <begin position="312"/>
        <end position="318"/>
    </location>
</feature>
<feature type="strand" evidence="2">
    <location>
        <begin position="332"/>
        <end position="335"/>
    </location>
</feature>
<feature type="helix" evidence="2">
    <location>
        <begin position="339"/>
        <end position="349"/>
    </location>
</feature>
<feature type="helix" evidence="2">
    <location>
        <begin position="357"/>
        <end position="377"/>
    </location>
</feature>
<feature type="helix" evidence="2">
    <location>
        <begin position="388"/>
        <end position="396"/>
    </location>
</feature>
<feature type="strand" evidence="2">
    <location>
        <begin position="399"/>
        <end position="405"/>
    </location>
</feature>
<feature type="helix" evidence="2">
    <location>
        <begin position="409"/>
        <end position="417"/>
    </location>
</feature>
<feature type="strand" evidence="2">
    <location>
        <begin position="422"/>
        <end position="428"/>
    </location>
</feature>
<feature type="strand" evidence="2">
    <location>
        <begin position="436"/>
        <end position="438"/>
    </location>
</feature>
<feature type="helix" evidence="2">
    <location>
        <begin position="439"/>
        <end position="446"/>
    </location>
</feature>
<feature type="turn" evidence="2">
    <location>
        <begin position="447"/>
        <end position="449"/>
    </location>
</feature>
<feature type="strand" evidence="2">
    <location>
        <begin position="450"/>
        <end position="458"/>
    </location>
</feature>
<feature type="helix" evidence="2">
    <location>
        <begin position="459"/>
        <end position="464"/>
    </location>
</feature>
<feature type="helix" evidence="2">
    <location>
        <begin position="466"/>
        <end position="469"/>
    </location>
</feature>
<feature type="helix" evidence="2">
    <location>
        <begin position="470"/>
        <end position="474"/>
    </location>
</feature>
<feature type="strand" evidence="2">
    <location>
        <begin position="479"/>
        <end position="484"/>
    </location>
</feature>
<feature type="helix" evidence="2">
    <location>
        <begin position="517"/>
        <end position="522"/>
    </location>
</feature>
<feature type="strand" evidence="2">
    <location>
        <begin position="526"/>
        <end position="529"/>
    </location>
</feature>
<feature type="helix" evidence="2">
    <location>
        <begin position="533"/>
        <end position="543"/>
    </location>
</feature>
<feature type="strand" evidence="2">
    <location>
        <begin position="546"/>
        <end position="554"/>
    </location>
</feature>
<gene>
    <name evidence="1" type="primary">menD</name>
    <name type="ordered locus">LMOf2365_1699</name>
</gene>
<proteinExistence type="evidence at protein level"/>
<comment type="function">
    <text evidence="1">Catalyzes the thiamine diphosphate-dependent decarboxylation of 2-oxoglutarate and the subsequent addition of the resulting succinic semialdehyde-thiamine pyrophosphate anion to isochorismate to yield 2-succinyl-5-enolpyruvyl-6-hydroxy-3-cyclohexene-1-carboxylate (SEPHCHC).</text>
</comment>
<comment type="catalytic activity">
    <reaction evidence="1">
        <text>isochorismate + 2-oxoglutarate + H(+) = 5-enolpyruvoyl-6-hydroxy-2-succinyl-cyclohex-3-ene-1-carboxylate + CO2</text>
        <dbReference type="Rhea" id="RHEA:25593"/>
        <dbReference type="ChEBI" id="CHEBI:15378"/>
        <dbReference type="ChEBI" id="CHEBI:16526"/>
        <dbReference type="ChEBI" id="CHEBI:16810"/>
        <dbReference type="ChEBI" id="CHEBI:29780"/>
        <dbReference type="ChEBI" id="CHEBI:58818"/>
        <dbReference type="EC" id="2.2.1.9"/>
    </reaction>
</comment>
<comment type="cofactor">
    <cofactor evidence="1">
        <name>Mg(2+)</name>
        <dbReference type="ChEBI" id="CHEBI:18420"/>
    </cofactor>
    <cofactor evidence="1">
        <name>Mn(2+)</name>
        <dbReference type="ChEBI" id="CHEBI:29035"/>
    </cofactor>
</comment>
<comment type="cofactor">
    <cofactor evidence="1">
        <name>thiamine diphosphate</name>
        <dbReference type="ChEBI" id="CHEBI:58937"/>
    </cofactor>
    <text evidence="1">Binds 1 thiamine pyrophosphate per subunit.</text>
</comment>
<comment type="pathway">
    <text evidence="1">Quinol/quinone metabolism; 1,4-dihydroxy-2-naphthoate biosynthesis; 1,4-dihydroxy-2-naphthoate from chorismate: step 2/7.</text>
</comment>
<comment type="pathway">
    <text evidence="1">Quinol/quinone metabolism; menaquinone biosynthesis.</text>
</comment>
<comment type="subunit">
    <text evidence="1">Homodimer.</text>
</comment>
<comment type="similarity">
    <text evidence="1">Belongs to the TPP enzyme family. MenD subfamily.</text>
</comment>
<protein>
    <recommendedName>
        <fullName evidence="1">2-succinyl-5-enolpyruvyl-6-hydroxy-3-cyclohexene-1-carboxylate synthase</fullName>
        <shortName evidence="1">SEPHCHC synthase</shortName>
        <ecNumber evidence="1">2.2.1.9</ecNumber>
    </recommendedName>
    <alternativeName>
        <fullName evidence="1">Menaquinone biosynthesis protein MenD</fullName>
    </alternativeName>
</protein>